<protein>
    <recommendedName>
        <fullName evidence="1">Enolase 2</fullName>
        <ecNumber evidence="1">4.2.1.11</ecNumber>
    </recommendedName>
    <alternativeName>
        <fullName evidence="1">2-phospho-D-glycerate hydro-lyase 2</fullName>
    </alternativeName>
    <alternativeName>
        <fullName evidence="1">2-phosphoglycerate dehydratase 2</fullName>
    </alternativeName>
</protein>
<dbReference type="EC" id="4.2.1.11" evidence="1"/>
<dbReference type="EMBL" id="AE017282">
    <property type="protein sequence ID" value="AAU91336.1"/>
    <property type="molecule type" value="Genomic_DNA"/>
</dbReference>
<dbReference type="RefSeq" id="WP_010961736.1">
    <property type="nucleotide sequence ID" value="NC_002977.6"/>
</dbReference>
<dbReference type="SMR" id="Q604M4"/>
<dbReference type="STRING" id="243233.MCA2515"/>
<dbReference type="GeneID" id="88224711"/>
<dbReference type="KEGG" id="mca:MCA2515"/>
<dbReference type="eggNOG" id="COG0148">
    <property type="taxonomic scope" value="Bacteria"/>
</dbReference>
<dbReference type="HOGENOM" id="CLU_031223_2_1_6"/>
<dbReference type="UniPathway" id="UPA00109">
    <property type="reaction ID" value="UER00187"/>
</dbReference>
<dbReference type="Proteomes" id="UP000006821">
    <property type="component" value="Chromosome"/>
</dbReference>
<dbReference type="GO" id="GO:0009986">
    <property type="term" value="C:cell surface"/>
    <property type="evidence" value="ECO:0007669"/>
    <property type="project" value="UniProtKB-SubCell"/>
</dbReference>
<dbReference type="GO" id="GO:0005576">
    <property type="term" value="C:extracellular region"/>
    <property type="evidence" value="ECO:0007669"/>
    <property type="project" value="UniProtKB-SubCell"/>
</dbReference>
<dbReference type="GO" id="GO:0000015">
    <property type="term" value="C:phosphopyruvate hydratase complex"/>
    <property type="evidence" value="ECO:0007669"/>
    <property type="project" value="InterPro"/>
</dbReference>
<dbReference type="GO" id="GO:0000287">
    <property type="term" value="F:magnesium ion binding"/>
    <property type="evidence" value="ECO:0007669"/>
    <property type="project" value="UniProtKB-UniRule"/>
</dbReference>
<dbReference type="GO" id="GO:0004634">
    <property type="term" value="F:phosphopyruvate hydratase activity"/>
    <property type="evidence" value="ECO:0007669"/>
    <property type="project" value="UniProtKB-UniRule"/>
</dbReference>
<dbReference type="GO" id="GO:0006096">
    <property type="term" value="P:glycolytic process"/>
    <property type="evidence" value="ECO:0007669"/>
    <property type="project" value="UniProtKB-UniRule"/>
</dbReference>
<dbReference type="CDD" id="cd03313">
    <property type="entry name" value="enolase"/>
    <property type="match status" value="1"/>
</dbReference>
<dbReference type="FunFam" id="3.20.20.120:FF:000001">
    <property type="entry name" value="Enolase"/>
    <property type="match status" value="1"/>
</dbReference>
<dbReference type="FunFam" id="3.30.390.10:FF:000001">
    <property type="entry name" value="Enolase"/>
    <property type="match status" value="1"/>
</dbReference>
<dbReference type="Gene3D" id="3.20.20.120">
    <property type="entry name" value="Enolase-like C-terminal domain"/>
    <property type="match status" value="1"/>
</dbReference>
<dbReference type="Gene3D" id="3.30.390.10">
    <property type="entry name" value="Enolase-like, N-terminal domain"/>
    <property type="match status" value="1"/>
</dbReference>
<dbReference type="HAMAP" id="MF_00318">
    <property type="entry name" value="Enolase"/>
    <property type="match status" value="1"/>
</dbReference>
<dbReference type="InterPro" id="IPR000941">
    <property type="entry name" value="Enolase"/>
</dbReference>
<dbReference type="InterPro" id="IPR036849">
    <property type="entry name" value="Enolase-like_C_sf"/>
</dbReference>
<dbReference type="InterPro" id="IPR029017">
    <property type="entry name" value="Enolase-like_N"/>
</dbReference>
<dbReference type="InterPro" id="IPR020810">
    <property type="entry name" value="Enolase_C"/>
</dbReference>
<dbReference type="InterPro" id="IPR020809">
    <property type="entry name" value="Enolase_CS"/>
</dbReference>
<dbReference type="InterPro" id="IPR020811">
    <property type="entry name" value="Enolase_N"/>
</dbReference>
<dbReference type="NCBIfam" id="TIGR01060">
    <property type="entry name" value="eno"/>
    <property type="match status" value="1"/>
</dbReference>
<dbReference type="PANTHER" id="PTHR11902">
    <property type="entry name" value="ENOLASE"/>
    <property type="match status" value="1"/>
</dbReference>
<dbReference type="PANTHER" id="PTHR11902:SF1">
    <property type="entry name" value="ENOLASE"/>
    <property type="match status" value="1"/>
</dbReference>
<dbReference type="Pfam" id="PF00113">
    <property type="entry name" value="Enolase_C"/>
    <property type="match status" value="1"/>
</dbReference>
<dbReference type="Pfam" id="PF03952">
    <property type="entry name" value="Enolase_N"/>
    <property type="match status" value="1"/>
</dbReference>
<dbReference type="PIRSF" id="PIRSF001400">
    <property type="entry name" value="Enolase"/>
    <property type="match status" value="1"/>
</dbReference>
<dbReference type="PRINTS" id="PR00148">
    <property type="entry name" value="ENOLASE"/>
</dbReference>
<dbReference type="SFLD" id="SFLDF00002">
    <property type="entry name" value="enolase"/>
    <property type="match status" value="1"/>
</dbReference>
<dbReference type="SFLD" id="SFLDG00178">
    <property type="entry name" value="enolase"/>
    <property type="match status" value="1"/>
</dbReference>
<dbReference type="SMART" id="SM01192">
    <property type="entry name" value="Enolase_C"/>
    <property type="match status" value="1"/>
</dbReference>
<dbReference type="SMART" id="SM01193">
    <property type="entry name" value="Enolase_N"/>
    <property type="match status" value="1"/>
</dbReference>
<dbReference type="SUPFAM" id="SSF51604">
    <property type="entry name" value="Enolase C-terminal domain-like"/>
    <property type="match status" value="1"/>
</dbReference>
<dbReference type="SUPFAM" id="SSF54826">
    <property type="entry name" value="Enolase N-terminal domain-like"/>
    <property type="match status" value="1"/>
</dbReference>
<dbReference type="PROSITE" id="PS00164">
    <property type="entry name" value="ENOLASE"/>
    <property type="match status" value="1"/>
</dbReference>
<proteinExistence type="inferred from homology"/>
<keyword id="KW-0963">Cytoplasm</keyword>
<keyword id="KW-0324">Glycolysis</keyword>
<keyword id="KW-0456">Lyase</keyword>
<keyword id="KW-0460">Magnesium</keyword>
<keyword id="KW-0479">Metal-binding</keyword>
<keyword id="KW-1185">Reference proteome</keyword>
<keyword id="KW-0964">Secreted</keyword>
<evidence type="ECO:0000255" key="1">
    <source>
        <dbReference type="HAMAP-Rule" id="MF_00318"/>
    </source>
</evidence>
<name>ENO2_METCA</name>
<gene>
    <name evidence="1" type="primary">eno2</name>
    <name type="synonym">eno-2</name>
    <name type="ordered locus">MCA2515</name>
</gene>
<sequence>MSKIVDILAREILDSRGNPTVQAEVILDSGAEGSAMVPSGASTGAREAIELRDGDASRYGGKGVLKAVENVRGPIKAALTGMDAADQAAIDRRLIELDGSDNKGVLGANAILAVSLATAHAAAADAKKPLYAYLNRSGEFLLPVPMMNIINGGAHADNSIDMQEFMILPVGAPSFREALRYGAEVFHALKKVLSDRGLATGVGDEGGFAPNLPSNEAAIGIILEAIEKAGYRPGEDICLGLDVASSEFYSDGIYTLASEGRRFTSEEFSDHLAAWVDKYPIVSIEDGMAENDWHGWGIHTDRLGRRIQLVGDDLFVTNPAILKQGIEARIANSILIKVNQIGTLTETLEAIHIARKAGYTSVVSHRSGETEGTTIADIAVATCTGQIKTGSLSRSDRIAKYNRLLKIEEELGDKARYGGRGAVKNLA</sequence>
<comment type="function">
    <text evidence="1">Catalyzes the reversible conversion of 2-phosphoglycerate (2-PG) into phosphoenolpyruvate (PEP). It is essential for the degradation of carbohydrates via glycolysis.</text>
</comment>
<comment type="catalytic activity">
    <reaction evidence="1">
        <text>(2R)-2-phosphoglycerate = phosphoenolpyruvate + H2O</text>
        <dbReference type="Rhea" id="RHEA:10164"/>
        <dbReference type="ChEBI" id="CHEBI:15377"/>
        <dbReference type="ChEBI" id="CHEBI:58289"/>
        <dbReference type="ChEBI" id="CHEBI:58702"/>
        <dbReference type="EC" id="4.2.1.11"/>
    </reaction>
</comment>
<comment type="cofactor">
    <cofactor evidence="1">
        <name>Mg(2+)</name>
        <dbReference type="ChEBI" id="CHEBI:18420"/>
    </cofactor>
    <text evidence="1">Binds a second Mg(2+) ion via substrate during catalysis.</text>
</comment>
<comment type="pathway">
    <text evidence="1">Carbohydrate degradation; glycolysis; pyruvate from D-glyceraldehyde 3-phosphate: step 4/5.</text>
</comment>
<comment type="subunit">
    <text evidence="1">Component of the RNA degradosome, a multiprotein complex involved in RNA processing and mRNA degradation.</text>
</comment>
<comment type="subcellular location">
    <subcellularLocation>
        <location evidence="1">Cytoplasm</location>
    </subcellularLocation>
    <subcellularLocation>
        <location evidence="1">Secreted</location>
    </subcellularLocation>
    <subcellularLocation>
        <location evidence="1">Cell surface</location>
    </subcellularLocation>
    <text evidence="1">Fractions of enolase are present in both the cytoplasm and on the cell surface.</text>
</comment>
<comment type="similarity">
    <text evidence="1">Belongs to the enolase family.</text>
</comment>
<reference key="1">
    <citation type="journal article" date="2004" name="PLoS Biol.">
        <title>Genomic insights into methanotrophy: the complete genome sequence of Methylococcus capsulatus (Bath).</title>
        <authorList>
            <person name="Ward N.L."/>
            <person name="Larsen O."/>
            <person name="Sakwa J."/>
            <person name="Bruseth L."/>
            <person name="Khouri H.M."/>
            <person name="Durkin A.S."/>
            <person name="Dimitrov G."/>
            <person name="Jiang L."/>
            <person name="Scanlan D."/>
            <person name="Kang K.H."/>
            <person name="Lewis M.R."/>
            <person name="Nelson K.E."/>
            <person name="Methe B.A."/>
            <person name="Wu M."/>
            <person name="Heidelberg J.F."/>
            <person name="Paulsen I.T."/>
            <person name="Fouts D.E."/>
            <person name="Ravel J."/>
            <person name="Tettelin H."/>
            <person name="Ren Q."/>
            <person name="Read T.D."/>
            <person name="DeBoy R.T."/>
            <person name="Seshadri R."/>
            <person name="Salzberg S.L."/>
            <person name="Jensen H.B."/>
            <person name="Birkeland N.K."/>
            <person name="Nelson W.C."/>
            <person name="Dodson R.J."/>
            <person name="Grindhaug S.H."/>
            <person name="Holt I.E."/>
            <person name="Eidhammer I."/>
            <person name="Jonasen I."/>
            <person name="Vanaken S."/>
            <person name="Utterback T.R."/>
            <person name="Feldblyum T.V."/>
            <person name="Fraser C.M."/>
            <person name="Lillehaug J.R."/>
            <person name="Eisen J.A."/>
        </authorList>
    </citation>
    <scope>NUCLEOTIDE SEQUENCE [LARGE SCALE GENOMIC DNA]</scope>
    <source>
        <strain>ATCC 33009 / NCIMB 11132 / Bath</strain>
    </source>
</reference>
<feature type="chain" id="PRO_0000133920" description="Enolase 2">
    <location>
        <begin position="1"/>
        <end position="427"/>
    </location>
</feature>
<feature type="active site" description="Proton donor" evidence="1">
    <location>
        <position position="205"/>
    </location>
</feature>
<feature type="active site" description="Proton acceptor" evidence="1">
    <location>
        <position position="337"/>
    </location>
</feature>
<feature type="binding site" evidence="1">
    <location>
        <position position="163"/>
    </location>
    <ligand>
        <name>(2R)-2-phosphoglycerate</name>
        <dbReference type="ChEBI" id="CHEBI:58289"/>
    </ligand>
</feature>
<feature type="binding site" evidence="1">
    <location>
        <position position="242"/>
    </location>
    <ligand>
        <name>Mg(2+)</name>
        <dbReference type="ChEBI" id="CHEBI:18420"/>
    </ligand>
</feature>
<feature type="binding site" evidence="1">
    <location>
        <position position="285"/>
    </location>
    <ligand>
        <name>Mg(2+)</name>
        <dbReference type="ChEBI" id="CHEBI:18420"/>
    </ligand>
</feature>
<feature type="binding site" evidence="1">
    <location>
        <position position="312"/>
    </location>
    <ligand>
        <name>Mg(2+)</name>
        <dbReference type="ChEBI" id="CHEBI:18420"/>
    </ligand>
</feature>
<feature type="binding site" evidence="1">
    <location>
        <position position="337"/>
    </location>
    <ligand>
        <name>(2R)-2-phosphoglycerate</name>
        <dbReference type="ChEBI" id="CHEBI:58289"/>
    </ligand>
</feature>
<feature type="binding site" evidence="1">
    <location>
        <position position="366"/>
    </location>
    <ligand>
        <name>(2R)-2-phosphoglycerate</name>
        <dbReference type="ChEBI" id="CHEBI:58289"/>
    </ligand>
</feature>
<feature type="binding site" evidence="1">
    <location>
        <position position="367"/>
    </location>
    <ligand>
        <name>(2R)-2-phosphoglycerate</name>
        <dbReference type="ChEBI" id="CHEBI:58289"/>
    </ligand>
</feature>
<feature type="binding site" evidence="1">
    <location>
        <position position="388"/>
    </location>
    <ligand>
        <name>(2R)-2-phosphoglycerate</name>
        <dbReference type="ChEBI" id="CHEBI:58289"/>
    </ligand>
</feature>
<organism>
    <name type="scientific">Methylococcus capsulatus (strain ATCC 33009 / NCIMB 11132 / Bath)</name>
    <dbReference type="NCBI Taxonomy" id="243233"/>
    <lineage>
        <taxon>Bacteria</taxon>
        <taxon>Pseudomonadati</taxon>
        <taxon>Pseudomonadota</taxon>
        <taxon>Gammaproteobacteria</taxon>
        <taxon>Methylococcales</taxon>
        <taxon>Methylococcaceae</taxon>
        <taxon>Methylococcus</taxon>
    </lineage>
</organism>
<accession>Q604M4</accession>